<proteinExistence type="inferred from homology"/>
<dbReference type="EMBL" id="AC009237">
    <property type="status" value="NOT_ANNOTATED_CDS"/>
    <property type="molecule type" value="Genomic_DNA"/>
</dbReference>
<dbReference type="CCDS" id="CCDS92808.1"/>
<dbReference type="RefSeq" id="NP_001157936.1">
    <property type="nucleotide sequence ID" value="NM_001164464.2"/>
</dbReference>
<dbReference type="SMR" id="A6NCK2"/>
<dbReference type="BioGRID" id="575596">
    <property type="interactions" value="3"/>
</dbReference>
<dbReference type="FunCoup" id="A6NCK2">
    <property type="interactions" value="8"/>
</dbReference>
<dbReference type="STRING" id="9606.ENSP00000492719"/>
<dbReference type="PhosphoSitePlus" id="A6NCK2"/>
<dbReference type="BioMuta" id="TRIM43B"/>
<dbReference type="PeptideAtlas" id="A6NCK2"/>
<dbReference type="Antibodypedia" id="78260">
    <property type="antibodies" value="8 antibodies from 4 providers"/>
</dbReference>
<dbReference type="DNASU" id="653192"/>
<dbReference type="Ensembl" id="ENST00000639673.3">
    <property type="protein sequence ID" value="ENSP00000492719.1"/>
    <property type="gene ID" value="ENSG00000144010.11"/>
</dbReference>
<dbReference type="GeneID" id="653192"/>
<dbReference type="KEGG" id="hsa:653192"/>
<dbReference type="MANE-Select" id="ENST00000639673.3">
    <property type="protein sequence ID" value="ENSP00000492719.1"/>
    <property type="RefSeq nucleotide sequence ID" value="NM_001164464.2"/>
    <property type="RefSeq protein sequence ID" value="NP_001157936.1"/>
</dbReference>
<dbReference type="AGR" id="HGNC:37146"/>
<dbReference type="CTD" id="653192"/>
<dbReference type="GeneCards" id="TRIM43B"/>
<dbReference type="HGNC" id="HGNC:37146">
    <property type="gene designation" value="TRIM43B"/>
</dbReference>
<dbReference type="HPA" id="ENSG00000144010">
    <property type="expression patterns" value="Not detected"/>
</dbReference>
<dbReference type="neXtProt" id="NX_A6NCK2"/>
<dbReference type="OpenTargets" id="ENSG00000144010"/>
<dbReference type="PharmGKB" id="PA165697592"/>
<dbReference type="VEuPathDB" id="HostDB:ENSG00000144010"/>
<dbReference type="GeneTree" id="ENSGT00940000160005"/>
<dbReference type="InParanoid" id="A6NCK2"/>
<dbReference type="OMA" id="NCPACSE"/>
<dbReference type="OrthoDB" id="9448301at2759"/>
<dbReference type="PAN-GO" id="A6NCK2">
    <property type="GO annotations" value="5 GO annotations based on evolutionary models"/>
</dbReference>
<dbReference type="PhylomeDB" id="A6NCK2"/>
<dbReference type="PathwayCommons" id="A6NCK2"/>
<dbReference type="SignaLink" id="A6NCK2"/>
<dbReference type="SIGNOR" id="A6NCK2"/>
<dbReference type="BioGRID-ORCS" id="653192">
    <property type="hits" value="5 hits in 233 CRISPR screens"/>
</dbReference>
<dbReference type="GenomeRNAi" id="653192"/>
<dbReference type="Pharos" id="A6NCK2">
    <property type="development level" value="Tdark"/>
</dbReference>
<dbReference type="PRO" id="PR:A6NCK2"/>
<dbReference type="Proteomes" id="UP000005640">
    <property type="component" value="Chromosome 2"/>
</dbReference>
<dbReference type="RNAct" id="A6NCK2">
    <property type="molecule type" value="protein"/>
</dbReference>
<dbReference type="Bgee" id="ENSG00000144010">
    <property type="expression patterns" value="Expressed in primordial germ cell in gonad and 5 other cell types or tissues"/>
</dbReference>
<dbReference type="GO" id="GO:0005737">
    <property type="term" value="C:cytoplasm"/>
    <property type="evidence" value="ECO:0000318"/>
    <property type="project" value="GO_Central"/>
</dbReference>
<dbReference type="GO" id="GO:0061630">
    <property type="term" value="F:ubiquitin protein ligase activity"/>
    <property type="evidence" value="ECO:0000318"/>
    <property type="project" value="GO_Central"/>
</dbReference>
<dbReference type="GO" id="GO:0008270">
    <property type="term" value="F:zinc ion binding"/>
    <property type="evidence" value="ECO:0007669"/>
    <property type="project" value="UniProtKB-KW"/>
</dbReference>
<dbReference type="GO" id="GO:0045087">
    <property type="term" value="P:innate immune response"/>
    <property type="evidence" value="ECO:0000318"/>
    <property type="project" value="GO_Central"/>
</dbReference>
<dbReference type="GO" id="GO:0010468">
    <property type="term" value="P:regulation of gene expression"/>
    <property type="evidence" value="ECO:0000318"/>
    <property type="project" value="GO_Central"/>
</dbReference>
<dbReference type="CDD" id="cd19783">
    <property type="entry name" value="Bbox2_TRIM43-like"/>
    <property type="match status" value="1"/>
</dbReference>
<dbReference type="CDD" id="cd16603">
    <property type="entry name" value="RING-HC_TRIM43-like_C-IV"/>
    <property type="match status" value="1"/>
</dbReference>
<dbReference type="Gene3D" id="2.60.120.920">
    <property type="match status" value="1"/>
</dbReference>
<dbReference type="Gene3D" id="3.30.160.60">
    <property type="entry name" value="Classic Zinc Finger"/>
    <property type="match status" value="1"/>
</dbReference>
<dbReference type="Gene3D" id="3.30.40.10">
    <property type="entry name" value="Zinc/RING finger domain, C3HC4 (zinc finger)"/>
    <property type="match status" value="1"/>
</dbReference>
<dbReference type="InterPro" id="IPR001870">
    <property type="entry name" value="B30.2/SPRY"/>
</dbReference>
<dbReference type="InterPro" id="IPR043136">
    <property type="entry name" value="B30.2/SPRY_sf"/>
</dbReference>
<dbReference type="InterPro" id="IPR003879">
    <property type="entry name" value="Butyrophylin_SPRY"/>
</dbReference>
<dbReference type="InterPro" id="IPR013320">
    <property type="entry name" value="ConA-like_dom_sf"/>
</dbReference>
<dbReference type="InterPro" id="IPR003877">
    <property type="entry name" value="SPRY_dom"/>
</dbReference>
<dbReference type="InterPro" id="IPR050143">
    <property type="entry name" value="TRIM/RBCC"/>
</dbReference>
<dbReference type="InterPro" id="IPR000315">
    <property type="entry name" value="Znf_B-box"/>
</dbReference>
<dbReference type="InterPro" id="IPR001841">
    <property type="entry name" value="Znf_RING"/>
</dbReference>
<dbReference type="InterPro" id="IPR013083">
    <property type="entry name" value="Znf_RING/FYVE/PHD"/>
</dbReference>
<dbReference type="InterPro" id="IPR017907">
    <property type="entry name" value="Znf_RING_CS"/>
</dbReference>
<dbReference type="PANTHER" id="PTHR24103">
    <property type="entry name" value="E3 UBIQUITIN-PROTEIN LIGASE TRIM"/>
    <property type="match status" value="1"/>
</dbReference>
<dbReference type="Pfam" id="PF00622">
    <property type="entry name" value="SPRY"/>
    <property type="match status" value="1"/>
</dbReference>
<dbReference type="Pfam" id="PF00643">
    <property type="entry name" value="zf-B_box"/>
    <property type="match status" value="1"/>
</dbReference>
<dbReference type="Pfam" id="PF15227">
    <property type="entry name" value="zf-C3HC4_4"/>
    <property type="match status" value="1"/>
</dbReference>
<dbReference type="PRINTS" id="PR01407">
    <property type="entry name" value="BUTYPHLNCDUF"/>
</dbReference>
<dbReference type="SMART" id="SM00336">
    <property type="entry name" value="BBOX"/>
    <property type="match status" value="1"/>
</dbReference>
<dbReference type="SMART" id="SM00184">
    <property type="entry name" value="RING"/>
    <property type="match status" value="1"/>
</dbReference>
<dbReference type="SMART" id="SM00449">
    <property type="entry name" value="SPRY"/>
    <property type="match status" value="1"/>
</dbReference>
<dbReference type="SUPFAM" id="SSF57845">
    <property type="entry name" value="B-box zinc-binding domain"/>
    <property type="match status" value="1"/>
</dbReference>
<dbReference type="SUPFAM" id="SSF49899">
    <property type="entry name" value="Concanavalin A-like lectins/glucanases"/>
    <property type="match status" value="1"/>
</dbReference>
<dbReference type="SUPFAM" id="SSF57850">
    <property type="entry name" value="RING/U-box"/>
    <property type="match status" value="1"/>
</dbReference>
<dbReference type="PROSITE" id="PS50188">
    <property type="entry name" value="B302_SPRY"/>
    <property type="match status" value="1"/>
</dbReference>
<dbReference type="PROSITE" id="PS50119">
    <property type="entry name" value="ZF_BBOX"/>
    <property type="match status" value="1"/>
</dbReference>
<dbReference type="PROSITE" id="PS00518">
    <property type="entry name" value="ZF_RING_1"/>
    <property type="match status" value="1"/>
</dbReference>
<dbReference type="PROSITE" id="PS50089">
    <property type="entry name" value="ZF_RING_2"/>
    <property type="match status" value="1"/>
</dbReference>
<comment type="similarity">
    <text evidence="5">Belongs to the TRIM/RBCC family.</text>
</comment>
<sequence length="446" mass="52310">MDSDFSHAFQKELTCVICLNYLVDPVTICCGHSFCRPCLCLSWEEAQSPANCPACREPSPKMDFKTNILLKNLVTIARKASLWQFLSSEKQICGTHRQTKKMFCDMDKSLLCLLCSNSQEHGAHKHYPIEEAAEEDREKLLKQMRILWKKIQENQRNLYEERRTAFLLRGDVVLRAQMIRNEYRKLHPVLHKEEKQHLERLNKEYQEIFQQLQRSWVKMDQKSKHLKEMYQELMEMCHKPEVELLQDLGDIVARSESVLLHMPQPVNPELTAGPITGLVYRLNRFRVEISFHFEVTNHNIRLFEDVRSWMFRRGPLNSDRSDYFAAWGARVFSFGKHYWELDVDNSCDWALGVCNNSWIRKNSTMVNSEDIFLLLCLKVDNHFNLLTTSPVFPHYIEKPLGRVGVFLDFESGSVSFLNVTKSSLIWSYPAGSLTFPVRPFFYTGHR</sequence>
<accession>A6NCK2</accession>
<feature type="chain" id="PRO_0000318857" description="Tripartite motif-containing protein 43B">
    <location>
        <begin position="1"/>
        <end position="446"/>
    </location>
</feature>
<feature type="domain" description="B30.2/SPRY" evidence="4">
    <location>
        <begin position="269"/>
        <end position="446"/>
    </location>
</feature>
<feature type="zinc finger region" description="RING-type" evidence="3">
    <location>
        <begin position="15"/>
        <end position="56"/>
    </location>
</feature>
<feature type="zinc finger region" description="B box-type" evidence="2">
    <location>
        <begin position="88"/>
        <end position="129"/>
    </location>
</feature>
<feature type="coiled-coil region" evidence="1">
    <location>
        <begin position="129"/>
        <end position="158"/>
    </location>
</feature>
<feature type="coiled-coil region" evidence="1">
    <location>
        <begin position="190"/>
        <end position="220"/>
    </location>
</feature>
<feature type="binding site" evidence="2">
    <location>
        <position position="93"/>
    </location>
    <ligand>
        <name>Zn(2+)</name>
        <dbReference type="ChEBI" id="CHEBI:29105"/>
    </ligand>
</feature>
<feature type="binding site" evidence="2">
    <location>
        <position position="96"/>
    </location>
    <ligand>
        <name>Zn(2+)</name>
        <dbReference type="ChEBI" id="CHEBI:29105"/>
    </ligand>
</feature>
<feature type="binding site" evidence="2">
    <location>
        <position position="115"/>
    </location>
    <ligand>
        <name>Zn(2+)</name>
        <dbReference type="ChEBI" id="CHEBI:29105"/>
    </ligand>
</feature>
<feature type="binding site" evidence="2">
    <location>
        <position position="121"/>
    </location>
    <ligand>
        <name>Zn(2+)</name>
        <dbReference type="ChEBI" id="CHEBI:29105"/>
    </ligand>
</feature>
<name>TR43B_HUMAN</name>
<keyword id="KW-0175">Coiled coil</keyword>
<keyword id="KW-0479">Metal-binding</keyword>
<keyword id="KW-1185">Reference proteome</keyword>
<keyword id="KW-0862">Zinc</keyword>
<keyword id="KW-0863">Zinc-finger</keyword>
<organism>
    <name type="scientific">Homo sapiens</name>
    <name type="common">Human</name>
    <dbReference type="NCBI Taxonomy" id="9606"/>
    <lineage>
        <taxon>Eukaryota</taxon>
        <taxon>Metazoa</taxon>
        <taxon>Chordata</taxon>
        <taxon>Craniata</taxon>
        <taxon>Vertebrata</taxon>
        <taxon>Euteleostomi</taxon>
        <taxon>Mammalia</taxon>
        <taxon>Eutheria</taxon>
        <taxon>Euarchontoglires</taxon>
        <taxon>Primates</taxon>
        <taxon>Haplorrhini</taxon>
        <taxon>Catarrhini</taxon>
        <taxon>Hominidae</taxon>
        <taxon>Homo</taxon>
    </lineage>
</organism>
<protein>
    <recommendedName>
        <fullName>Tripartite motif-containing protein 43B</fullName>
    </recommendedName>
</protein>
<evidence type="ECO:0000255" key="1"/>
<evidence type="ECO:0000255" key="2">
    <source>
        <dbReference type="PROSITE-ProRule" id="PRU00024"/>
    </source>
</evidence>
<evidence type="ECO:0000255" key="3">
    <source>
        <dbReference type="PROSITE-ProRule" id="PRU00175"/>
    </source>
</evidence>
<evidence type="ECO:0000255" key="4">
    <source>
        <dbReference type="PROSITE-ProRule" id="PRU00548"/>
    </source>
</evidence>
<evidence type="ECO:0000305" key="5"/>
<reference key="1">
    <citation type="journal article" date="2005" name="Nature">
        <title>Generation and annotation of the DNA sequences of human chromosomes 2 and 4.</title>
        <authorList>
            <person name="Hillier L.W."/>
            <person name="Graves T.A."/>
            <person name="Fulton R.S."/>
            <person name="Fulton L.A."/>
            <person name="Pepin K.H."/>
            <person name="Minx P."/>
            <person name="Wagner-McPherson C."/>
            <person name="Layman D."/>
            <person name="Wylie K."/>
            <person name="Sekhon M."/>
            <person name="Becker M.C."/>
            <person name="Fewell G.A."/>
            <person name="Delehaunty K.D."/>
            <person name="Miner T.L."/>
            <person name="Nash W.E."/>
            <person name="Kremitzki C."/>
            <person name="Oddy L."/>
            <person name="Du H."/>
            <person name="Sun H."/>
            <person name="Bradshaw-Cordum H."/>
            <person name="Ali J."/>
            <person name="Carter J."/>
            <person name="Cordes M."/>
            <person name="Harris A."/>
            <person name="Isak A."/>
            <person name="van Brunt A."/>
            <person name="Nguyen C."/>
            <person name="Du F."/>
            <person name="Courtney L."/>
            <person name="Kalicki J."/>
            <person name="Ozersky P."/>
            <person name="Abbott S."/>
            <person name="Armstrong J."/>
            <person name="Belter E.A."/>
            <person name="Caruso L."/>
            <person name="Cedroni M."/>
            <person name="Cotton M."/>
            <person name="Davidson T."/>
            <person name="Desai A."/>
            <person name="Elliott G."/>
            <person name="Erb T."/>
            <person name="Fronick C."/>
            <person name="Gaige T."/>
            <person name="Haakenson W."/>
            <person name="Haglund K."/>
            <person name="Holmes A."/>
            <person name="Harkins R."/>
            <person name="Kim K."/>
            <person name="Kruchowski S.S."/>
            <person name="Strong C.M."/>
            <person name="Grewal N."/>
            <person name="Goyea E."/>
            <person name="Hou S."/>
            <person name="Levy A."/>
            <person name="Martinka S."/>
            <person name="Mead K."/>
            <person name="McLellan M.D."/>
            <person name="Meyer R."/>
            <person name="Randall-Maher J."/>
            <person name="Tomlinson C."/>
            <person name="Dauphin-Kohlberg S."/>
            <person name="Kozlowicz-Reilly A."/>
            <person name="Shah N."/>
            <person name="Swearengen-Shahid S."/>
            <person name="Snider J."/>
            <person name="Strong J.T."/>
            <person name="Thompson J."/>
            <person name="Yoakum M."/>
            <person name="Leonard S."/>
            <person name="Pearman C."/>
            <person name="Trani L."/>
            <person name="Radionenko M."/>
            <person name="Waligorski J.E."/>
            <person name="Wang C."/>
            <person name="Rock S.M."/>
            <person name="Tin-Wollam A.-M."/>
            <person name="Maupin R."/>
            <person name="Latreille P."/>
            <person name="Wendl M.C."/>
            <person name="Yang S.-P."/>
            <person name="Pohl C."/>
            <person name="Wallis J.W."/>
            <person name="Spieth J."/>
            <person name="Bieri T.A."/>
            <person name="Berkowicz N."/>
            <person name="Nelson J.O."/>
            <person name="Osborne J."/>
            <person name="Ding L."/>
            <person name="Meyer R."/>
            <person name="Sabo A."/>
            <person name="Shotland Y."/>
            <person name="Sinha P."/>
            <person name="Wohldmann P.E."/>
            <person name="Cook L.L."/>
            <person name="Hickenbotham M.T."/>
            <person name="Eldred J."/>
            <person name="Williams D."/>
            <person name="Jones T.A."/>
            <person name="She X."/>
            <person name="Ciccarelli F.D."/>
            <person name="Izaurralde E."/>
            <person name="Taylor J."/>
            <person name="Schmutz J."/>
            <person name="Myers R.M."/>
            <person name="Cox D.R."/>
            <person name="Huang X."/>
            <person name="McPherson J.D."/>
            <person name="Mardis E.R."/>
            <person name="Clifton S.W."/>
            <person name="Warren W.C."/>
            <person name="Chinwalla A.T."/>
            <person name="Eddy S.R."/>
            <person name="Marra M.A."/>
            <person name="Ovcharenko I."/>
            <person name="Furey T.S."/>
            <person name="Miller W."/>
            <person name="Eichler E.E."/>
            <person name="Bork P."/>
            <person name="Suyama M."/>
            <person name="Torrents D."/>
            <person name="Waterston R.H."/>
            <person name="Wilson R.K."/>
        </authorList>
    </citation>
    <scope>NUCLEOTIDE SEQUENCE [LARGE SCALE GENOMIC DNA]</scope>
</reference>
<gene>
    <name type="primary">TRIM43B</name>
</gene>